<evidence type="ECO:0000255" key="1">
    <source>
        <dbReference type="HAMAP-Rule" id="MF_00735"/>
    </source>
</evidence>
<name>PRMA_PARP8</name>
<accession>B2JH19</accession>
<sequence length="300" mass="32603">MSYRELVVELAREHAEALSDALLELGALSVSVEDADADTPDEQPLFGEPGLTPERTAWTHSRVIALLAPEHEPAVLLAAAANELGLADTPSFSVRAVEEQDWVRLTQSQFDPIPIGERIWVVPSWHDAPDPDALVLELDPGLAFGTGSHPTTRLCMEWLEQSVQKDQSVLDYGCGSGILAILAKKCGANPVFGIDIDPQAVESARHNSERNRAEITYGLPADCPAGEFDIVVANILSNPLKLMASMLSSKVKPGGRIALSGILARQAEEVASVYRQWIDIAVWREHEGWVCLAGTRRESN</sequence>
<proteinExistence type="inferred from homology"/>
<feature type="chain" id="PRO_1000192593" description="Ribosomal protein L11 methyltransferase">
    <location>
        <begin position="1"/>
        <end position="300"/>
    </location>
</feature>
<feature type="binding site" evidence="1">
    <location>
        <position position="152"/>
    </location>
    <ligand>
        <name>S-adenosyl-L-methionine</name>
        <dbReference type="ChEBI" id="CHEBI:59789"/>
    </ligand>
</feature>
<feature type="binding site" evidence="1">
    <location>
        <position position="173"/>
    </location>
    <ligand>
        <name>S-adenosyl-L-methionine</name>
        <dbReference type="ChEBI" id="CHEBI:59789"/>
    </ligand>
</feature>
<feature type="binding site" evidence="1">
    <location>
        <position position="195"/>
    </location>
    <ligand>
        <name>S-adenosyl-L-methionine</name>
        <dbReference type="ChEBI" id="CHEBI:59789"/>
    </ligand>
</feature>
<feature type="binding site" evidence="1">
    <location>
        <position position="234"/>
    </location>
    <ligand>
        <name>S-adenosyl-L-methionine</name>
        <dbReference type="ChEBI" id="CHEBI:59789"/>
    </ligand>
</feature>
<keyword id="KW-0963">Cytoplasm</keyword>
<keyword id="KW-0489">Methyltransferase</keyword>
<keyword id="KW-1185">Reference proteome</keyword>
<keyword id="KW-0949">S-adenosyl-L-methionine</keyword>
<keyword id="KW-0808">Transferase</keyword>
<organism>
    <name type="scientific">Paraburkholderia phymatum (strain DSM 17167 / CIP 108236 / LMG 21445 / STM815)</name>
    <name type="common">Burkholderia phymatum</name>
    <dbReference type="NCBI Taxonomy" id="391038"/>
    <lineage>
        <taxon>Bacteria</taxon>
        <taxon>Pseudomonadati</taxon>
        <taxon>Pseudomonadota</taxon>
        <taxon>Betaproteobacteria</taxon>
        <taxon>Burkholderiales</taxon>
        <taxon>Burkholderiaceae</taxon>
        <taxon>Paraburkholderia</taxon>
    </lineage>
</organism>
<reference key="1">
    <citation type="journal article" date="2014" name="Stand. Genomic Sci.">
        <title>Complete genome sequence of Burkholderia phymatum STM815(T), a broad host range and efficient nitrogen-fixing symbiont of Mimosa species.</title>
        <authorList>
            <person name="Moulin L."/>
            <person name="Klonowska A."/>
            <person name="Caroline B."/>
            <person name="Booth K."/>
            <person name="Vriezen J.A."/>
            <person name="Melkonian R."/>
            <person name="James E.K."/>
            <person name="Young J.P."/>
            <person name="Bena G."/>
            <person name="Hauser L."/>
            <person name="Land M."/>
            <person name="Kyrpides N."/>
            <person name="Bruce D."/>
            <person name="Chain P."/>
            <person name="Copeland A."/>
            <person name="Pitluck S."/>
            <person name="Woyke T."/>
            <person name="Lizotte-Waniewski M."/>
            <person name="Bristow J."/>
            <person name="Riley M."/>
        </authorList>
    </citation>
    <scope>NUCLEOTIDE SEQUENCE [LARGE SCALE GENOMIC DNA]</scope>
    <source>
        <strain>DSM 17167 / CIP 108236 / LMG 21445 / STM815</strain>
    </source>
</reference>
<comment type="function">
    <text evidence="1">Methylates ribosomal protein L11.</text>
</comment>
<comment type="catalytic activity">
    <reaction evidence="1">
        <text>L-lysyl-[protein] + 3 S-adenosyl-L-methionine = N(6),N(6),N(6)-trimethyl-L-lysyl-[protein] + 3 S-adenosyl-L-homocysteine + 3 H(+)</text>
        <dbReference type="Rhea" id="RHEA:54192"/>
        <dbReference type="Rhea" id="RHEA-COMP:9752"/>
        <dbReference type="Rhea" id="RHEA-COMP:13826"/>
        <dbReference type="ChEBI" id="CHEBI:15378"/>
        <dbReference type="ChEBI" id="CHEBI:29969"/>
        <dbReference type="ChEBI" id="CHEBI:57856"/>
        <dbReference type="ChEBI" id="CHEBI:59789"/>
        <dbReference type="ChEBI" id="CHEBI:61961"/>
    </reaction>
</comment>
<comment type="subcellular location">
    <subcellularLocation>
        <location evidence="1">Cytoplasm</location>
    </subcellularLocation>
</comment>
<comment type="similarity">
    <text evidence="1">Belongs to the methyltransferase superfamily. PrmA family.</text>
</comment>
<gene>
    <name evidence="1" type="primary">prmA</name>
    <name type="ordered locus">Bphy_2631</name>
</gene>
<protein>
    <recommendedName>
        <fullName evidence="1">Ribosomal protein L11 methyltransferase</fullName>
        <shortName evidence="1">L11 Mtase</shortName>
        <ecNumber evidence="1">2.1.1.-</ecNumber>
    </recommendedName>
</protein>
<dbReference type="EC" id="2.1.1.-" evidence="1"/>
<dbReference type="EMBL" id="CP001043">
    <property type="protein sequence ID" value="ACC71803.1"/>
    <property type="molecule type" value="Genomic_DNA"/>
</dbReference>
<dbReference type="RefSeq" id="WP_012402005.1">
    <property type="nucleotide sequence ID" value="NC_010622.1"/>
</dbReference>
<dbReference type="SMR" id="B2JH19"/>
<dbReference type="STRING" id="391038.Bphy_2631"/>
<dbReference type="KEGG" id="bph:Bphy_2631"/>
<dbReference type="eggNOG" id="COG2264">
    <property type="taxonomic scope" value="Bacteria"/>
</dbReference>
<dbReference type="HOGENOM" id="CLU_049382_4_1_4"/>
<dbReference type="OrthoDB" id="9785995at2"/>
<dbReference type="Proteomes" id="UP000001192">
    <property type="component" value="Chromosome 1"/>
</dbReference>
<dbReference type="GO" id="GO:0005829">
    <property type="term" value="C:cytosol"/>
    <property type="evidence" value="ECO:0007669"/>
    <property type="project" value="TreeGrafter"/>
</dbReference>
<dbReference type="GO" id="GO:0016279">
    <property type="term" value="F:protein-lysine N-methyltransferase activity"/>
    <property type="evidence" value="ECO:0007669"/>
    <property type="project" value="TreeGrafter"/>
</dbReference>
<dbReference type="GO" id="GO:0032259">
    <property type="term" value="P:methylation"/>
    <property type="evidence" value="ECO:0007669"/>
    <property type="project" value="UniProtKB-KW"/>
</dbReference>
<dbReference type="CDD" id="cd02440">
    <property type="entry name" value="AdoMet_MTases"/>
    <property type="match status" value="1"/>
</dbReference>
<dbReference type="Gene3D" id="3.40.50.150">
    <property type="entry name" value="Vaccinia Virus protein VP39"/>
    <property type="match status" value="1"/>
</dbReference>
<dbReference type="HAMAP" id="MF_00735">
    <property type="entry name" value="Methyltr_PrmA"/>
    <property type="match status" value="1"/>
</dbReference>
<dbReference type="InterPro" id="IPR050078">
    <property type="entry name" value="Ribosomal_L11_MeTrfase_PrmA"/>
</dbReference>
<dbReference type="InterPro" id="IPR004498">
    <property type="entry name" value="Ribosomal_PrmA_MeTrfase"/>
</dbReference>
<dbReference type="InterPro" id="IPR029063">
    <property type="entry name" value="SAM-dependent_MTases_sf"/>
</dbReference>
<dbReference type="NCBIfam" id="TIGR00406">
    <property type="entry name" value="prmA"/>
    <property type="match status" value="1"/>
</dbReference>
<dbReference type="PANTHER" id="PTHR43648">
    <property type="entry name" value="ELECTRON TRANSFER FLAVOPROTEIN BETA SUBUNIT LYSINE METHYLTRANSFERASE"/>
    <property type="match status" value="1"/>
</dbReference>
<dbReference type="PANTHER" id="PTHR43648:SF1">
    <property type="entry name" value="ELECTRON TRANSFER FLAVOPROTEIN BETA SUBUNIT LYSINE METHYLTRANSFERASE"/>
    <property type="match status" value="1"/>
</dbReference>
<dbReference type="Pfam" id="PF06325">
    <property type="entry name" value="PrmA"/>
    <property type="match status" value="1"/>
</dbReference>
<dbReference type="PIRSF" id="PIRSF000401">
    <property type="entry name" value="RPL11_MTase"/>
    <property type="match status" value="1"/>
</dbReference>
<dbReference type="SUPFAM" id="SSF53335">
    <property type="entry name" value="S-adenosyl-L-methionine-dependent methyltransferases"/>
    <property type="match status" value="1"/>
</dbReference>